<comment type="function">
    <text>Insect-immune protein. Forms a protein complex at the bacterial surface. Can inhibit hemocyte aggregation.</text>
</comment>
<comment type="subcellular location">
    <subcellularLocation>
        <location>Secreted</location>
        <location>Extracellular space</location>
    </subcellularLocation>
</comment>
<comment type="tissue specificity">
    <text>Hemolymph.</text>
</comment>
<comment type="induction">
    <text>By bacterial infection, wounding, or bacterial cell wall components injection.</text>
</comment>
<comment type="similarity">
    <text evidence="5">Belongs to the hemolin family.</text>
</comment>
<proteinExistence type="evidence at protein level"/>
<dbReference type="EMBL" id="M63398">
    <property type="protein sequence ID" value="AAA29188.1"/>
    <property type="molecule type" value="mRNA"/>
</dbReference>
<dbReference type="PIR" id="A37778">
    <property type="entry name" value="A37778"/>
</dbReference>
<dbReference type="PDB" id="1BIH">
    <property type="method" value="X-ray"/>
    <property type="resolution" value="3.10 A"/>
    <property type="chains" value="A/B=19-413"/>
</dbReference>
<dbReference type="PDBsum" id="1BIH"/>
<dbReference type="SMR" id="P25033"/>
<dbReference type="EvolutionaryTrace" id="P25033"/>
<dbReference type="GO" id="GO:0030424">
    <property type="term" value="C:axon"/>
    <property type="evidence" value="ECO:0007669"/>
    <property type="project" value="TreeGrafter"/>
</dbReference>
<dbReference type="GO" id="GO:0005576">
    <property type="term" value="C:extracellular region"/>
    <property type="evidence" value="ECO:0007669"/>
    <property type="project" value="UniProtKB-SubCell"/>
</dbReference>
<dbReference type="GO" id="GO:0043025">
    <property type="term" value="C:neuronal cell body"/>
    <property type="evidence" value="ECO:0007669"/>
    <property type="project" value="TreeGrafter"/>
</dbReference>
<dbReference type="GO" id="GO:0005886">
    <property type="term" value="C:plasma membrane"/>
    <property type="evidence" value="ECO:0007669"/>
    <property type="project" value="TreeGrafter"/>
</dbReference>
<dbReference type="GO" id="GO:0008046">
    <property type="term" value="F:axon guidance receptor activity"/>
    <property type="evidence" value="ECO:0007669"/>
    <property type="project" value="TreeGrafter"/>
</dbReference>
<dbReference type="GO" id="GO:0007156">
    <property type="term" value="P:homophilic cell adhesion via plasma membrane adhesion molecules"/>
    <property type="evidence" value="ECO:0007669"/>
    <property type="project" value="TreeGrafter"/>
</dbReference>
<dbReference type="GO" id="GO:0045087">
    <property type="term" value="P:innate immune response"/>
    <property type="evidence" value="ECO:0007669"/>
    <property type="project" value="UniProtKB-KW"/>
</dbReference>
<dbReference type="GO" id="GO:0050808">
    <property type="term" value="P:synapse organization"/>
    <property type="evidence" value="ECO:0007669"/>
    <property type="project" value="TreeGrafter"/>
</dbReference>
<dbReference type="CDD" id="cd20979">
    <property type="entry name" value="IgI_1_hemolin-like"/>
    <property type="match status" value="1"/>
</dbReference>
<dbReference type="CDD" id="cd20965">
    <property type="entry name" value="IgI_2_hemolin-like"/>
    <property type="match status" value="1"/>
</dbReference>
<dbReference type="CDD" id="cd20977">
    <property type="entry name" value="IgI_3_hemolin-like"/>
    <property type="match status" value="1"/>
</dbReference>
<dbReference type="CDD" id="cd20978">
    <property type="entry name" value="IgI_4_hemolin-like"/>
    <property type="match status" value="1"/>
</dbReference>
<dbReference type="FunFam" id="2.60.40.10:FF:000032">
    <property type="entry name" value="palladin isoform X1"/>
    <property type="match status" value="1"/>
</dbReference>
<dbReference type="Gene3D" id="2.60.40.10">
    <property type="entry name" value="Immunoglobulins"/>
    <property type="match status" value="4"/>
</dbReference>
<dbReference type="InterPro" id="IPR050958">
    <property type="entry name" value="Cell_Adh-Cytoskel_Orgn"/>
</dbReference>
<dbReference type="InterPro" id="IPR007110">
    <property type="entry name" value="Ig-like_dom"/>
</dbReference>
<dbReference type="InterPro" id="IPR036179">
    <property type="entry name" value="Ig-like_dom_sf"/>
</dbReference>
<dbReference type="InterPro" id="IPR013783">
    <property type="entry name" value="Ig-like_fold"/>
</dbReference>
<dbReference type="InterPro" id="IPR013098">
    <property type="entry name" value="Ig_I-set"/>
</dbReference>
<dbReference type="InterPro" id="IPR003599">
    <property type="entry name" value="Ig_sub"/>
</dbReference>
<dbReference type="InterPro" id="IPR003598">
    <property type="entry name" value="Ig_sub2"/>
</dbReference>
<dbReference type="PANTHER" id="PTHR45080">
    <property type="entry name" value="CONTACTIN 5"/>
    <property type="match status" value="1"/>
</dbReference>
<dbReference type="PANTHER" id="PTHR45080:SF34">
    <property type="entry name" value="MYOSIN LIGHT CHAIN KINASE, SMOOTH MUSCLE-LIKE"/>
    <property type="match status" value="1"/>
</dbReference>
<dbReference type="Pfam" id="PF07679">
    <property type="entry name" value="I-set"/>
    <property type="match status" value="2"/>
</dbReference>
<dbReference type="Pfam" id="PF13927">
    <property type="entry name" value="Ig_3"/>
    <property type="match status" value="1"/>
</dbReference>
<dbReference type="PIRSF" id="PIRSF000615">
    <property type="entry name" value="TyrPK_CSF1-R"/>
    <property type="match status" value="1"/>
</dbReference>
<dbReference type="SMART" id="SM00409">
    <property type="entry name" value="IG"/>
    <property type="match status" value="4"/>
</dbReference>
<dbReference type="SMART" id="SM00408">
    <property type="entry name" value="IGc2"/>
    <property type="match status" value="4"/>
</dbReference>
<dbReference type="SUPFAM" id="SSF48726">
    <property type="entry name" value="Immunoglobulin"/>
    <property type="match status" value="4"/>
</dbReference>
<dbReference type="PROSITE" id="PS50835">
    <property type="entry name" value="IG_LIKE"/>
    <property type="match status" value="4"/>
</dbReference>
<keyword id="KW-0002">3D-structure</keyword>
<keyword id="KW-0903">Direct protein sequencing</keyword>
<keyword id="KW-1015">Disulfide bond</keyword>
<keyword id="KW-0325">Glycoprotein</keyword>
<keyword id="KW-0391">Immunity</keyword>
<keyword id="KW-0393">Immunoglobulin domain</keyword>
<keyword id="KW-0399">Innate immunity</keyword>
<keyword id="KW-0677">Repeat</keyword>
<keyword id="KW-0964">Secreted</keyword>
<keyword id="KW-0732">Signal</keyword>
<name>HEMO_HYACE</name>
<protein>
    <recommendedName>
        <fullName>Hemolin</fullName>
    </recommendedName>
    <alternativeName>
        <fullName>Hemocyte aggregation inhibitor</fullName>
    </alternativeName>
    <alternativeName>
        <fullName>Protein P4</fullName>
    </alternativeName>
</protein>
<accession>P25033</accession>
<reference key="1">
    <citation type="journal article" date="1990" name="Science">
        <title>Hemolin: an insect-immune protein belonging to the immunoglobulin superfamily.</title>
        <authorList>
            <person name="Sun S.-C."/>
            <person name="Lindstroem I."/>
            <person name="Boman H.G."/>
            <person name="Faye I."/>
            <person name="Schmidt O."/>
        </authorList>
    </citation>
    <scope>NUCLEOTIDE SEQUENCE [MRNA]</scope>
</reference>
<reference key="2">
    <citation type="journal article" date="1987" name="Insect Biochem.">
        <title>Structure and properties of protein P4, the major bacteria-inducible protein in pupae of Hyalophora cecropia.</title>
        <authorList>
            <person name="Andersson K."/>
            <person name="Steiner H."/>
        </authorList>
    </citation>
    <scope>PROTEIN SEQUENCE OF 20-42</scope>
</reference>
<reference key="3">
    <citation type="journal article" date="1998" name="Science">
        <title>Crystal structure of hemolin: a horseshoe shape with implications for homophilic adhesion.</title>
        <authorList>
            <person name="Su X.-D."/>
            <person name="Gastinel L.N."/>
            <person name="Vaughn D.E."/>
            <person name="Faye I."/>
            <person name="Poon P."/>
            <person name="Bjorkman P.J."/>
        </authorList>
    </citation>
    <scope>X-RAY CRYSTALLOGRAPHY (3.1 ANGSTROMS)</scope>
    <scope>SEQUENCE REVISION TO 173-177</scope>
    <scope>DISULFIDE BOND</scope>
</reference>
<organism>
    <name type="scientific">Hyalophora cecropia</name>
    <name type="common">Cecropia moth</name>
    <name type="synonym">Samia cecropia</name>
    <dbReference type="NCBI Taxonomy" id="7123"/>
    <lineage>
        <taxon>Eukaryota</taxon>
        <taxon>Metazoa</taxon>
        <taxon>Ecdysozoa</taxon>
        <taxon>Arthropoda</taxon>
        <taxon>Hexapoda</taxon>
        <taxon>Insecta</taxon>
        <taxon>Pterygota</taxon>
        <taxon>Neoptera</taxon>
        <taxon>Endopterygota</taxon>
        <taxon>Lepidoptera</taxon>
        <taxon>Glossata</taxon>
        <taxon>Ditrysia</taxon>
        <taxon>Bombycoidea</taxon>
        <taxon>Saturniidae</taxon>
        <taxon>Saturniinae</taxon>
        <taxon>Attacini</taxon>
        <taxon>Hyalophora</taxon>
    </lineage>
</organism>
<feature type="signal peptide" evidence="4">
    <location>
        <begin position="1"/>
        <end position="19"/>
    </location>
</feature>
<feature type="chain" id="PRO_0000014772" description="Hemolin">
    <location>
        <begin position="20"/>
        <end position="413"/>
    </location>
</feature>
<feature type="domain" description="Ig-like C2-type 1">
    <location>
        <begin position="25"/>
        <end position="112"/>
    </location>
</feature>
<feature type="domain" description="Ig-like C2-type 2">
    <location>
        <begin position="122"/>
        <end position="211"/>
    </location>
</feature>
<feature type="domain" description="Ig-like C2-type 3">
    <location>
        <begin position="233"/>
        <end position="322"/>
    </location>
</feature>
<feature type="domain" description="Ig-like C2-type 4">
    <location>
        <begin position="327"/>
        <end position="413"/>
    </location>
</feature>
<feature type="glycosylation site" description="N-linked (GlcNAc...) asparagine" evidence="1">
    <location>
        <position position="283"/>
    </location>
</feature>
<feature type="disulfide bond" evidence="3 6">
    <location>
        <begin position="46"/>
        <end position="97"/>
    </location>
</feature>
<feature type="disulfide bond" evidence="2 3 6">
    <location>
        <begin position="140"/>
        <end position="199"/>
    </location>
</feature>
<feature type="disulfide bond" evidence="3 6">
    <location>
        <begin position="252"/>
        <end position="305"/>
    </location>
</feature>
<feature type="disulfide bond" evidence="2 3 6">
    <location>
        <begin position="349"/>
        <end position="395"/>
    </location>
</feature>
<feature type="sequence conflict" description="In Ref. 1; AAA29188." evidence="5" ref="1">
    <original>ITAGP</original>
    <variation>NHSWT</variation>
    <location>
        <begin position="173"/>
        <end position="177"/>
    </location>
</feature>
<feature type="strand" evidence="7">
    <location>
        <begin position="32"/>
        <end position="37"/>
    </location>
</feature>
<feature type="strand" evidence="7">
    <location>
        <begin position="42"/>
        <end position="44"/>
    </location>
</feature>
<feature type="strand" evidence="7">
    <location>
        <begin position="48"/>
        <end position="50"/>
    </location>
</feature>
<feature type="strand" evidence="7">
    <location>
        <begin position="56"/>
        <end position="65"/>
    </location>
</feature>
<feature type="turn" evidence="7">
    <location>
        <begin position="68"/>
        <end position="72"/>
    </location>
</feature>
<feature type="strand" evidence="7">
    <location>
        <begin position="73"/>
        <end position="75"/>
    </location>
</feature>
<feature type="strand" evidence="7">
    <location>
        <begin position="82"/>
        <end position="86"/>
    </location>
</feature>
<feature type="helix" evidence="7">
    <location>
        <begin position="89"/>
        <end position="91"/>
    </location>
</feature>
<feature type="strand" evidence="7">
    <location>
        <begin position="93"/>
        <end position="101"/>
    </location>
</feature>
<feature type="strand" evidence="7">
    <location>
        <begin position="104"/>
        <end position="107"/>
    </location>
</feature>
<feature type="strand" evidence="7">
    <location>
        <begin position="111"/>
        <end position="119"/>
    </location>
</feature>
<feature type="strand" evidence="7">
    <location>
        <begin position="124"/>
        <end position="128"/>
    </location>
</feature>
<feature type="strand" evidence="7">
    <location>
        <begin position="134"/>
        <end position="138"/>
    </location>
</feature>
<feature type="strand" evidence="7">
    <location>
        <begin position="144"/>
        <end position="147"/>
    </location>
</feature>
<feature type="strand" evidence="7">
    <location>
        <begin position="150"/>
        <end position="157"/>
    </location>
</feature>
<feature type="helix" evidence="7">
    <location>
        <begin position="162"/>
        <end position="164"/>
    </location>
</feature>
<feature type="strand" evidence="7">
    <location>
        <begin position="173"/>
        <end position="175"/>
    </location>
</feature>
<feature type="strand" evidence="7">
    <location>
        <begin position="181"/>
        <end position="186"/>
    </location>
</feature>
<feature type="helix" evidence="7">
    <location>
        <begin position="188"/>
        <end position="190"/>
    </location>
</feature>
<feature type="strand" evidence="7">
    <location>
        <begin position="193"/>
        <end position="202"/>
    </location>
</feature>
<feature type="strand" evidence="7">
    <location>
        <begin position="210"/>
        <end position="217"/>
    </location>
</feature>
<feature type="strand" evidence="7">
    <location>
        <begin position="232"/>
        <end position="236"/>
    </location>
</feature>
<feature type="strand" evidence="7">
    <location>
        <begin position="239"/>
        <end position="243"/>
    </location>
</feature>
<feature type="strand" evidence="7">
    <location>
        <begin position="248"/>
        <end position="255"/>
    </location>
</feature>
<feature type="strand" evidence="7">
    <location>
        <begin position="263"/>
        <end position="266"/>
    </location>
</feature>
<feature type="strand" evidence="7">
    <location>
        <begin position="277"/>
        <end position="281"/>
    </location>
</feature>
<feature type="strand" evidence="7">
    <location>
        <begin position="283"/>
        <end position="285"/>
    </location>
</feature>
<feature type="strand" evidence="7">
    <location>
        <begin position="288"/>
        <end position="294"/>
    </location>
</feature>
<feature type="helix" evidence="7">
    <location>
        <begin position="297"/>
        <end position="299"/>
    </location>
</feature>
<feature type="strand" evidence="7">
    <location>
        <begin position="301"/>
        <end position="307"/>
    </location>
</feature>
<feature type="strand" evidence="7">
    <location>
        <begin position="310"/>
        <end position="313"/>
    </location>
</feature>
<feature type="strand" evidence="7">
    <location>
        <begin position="315"/>
        <end position="331"/>
    </location>
</feature>
<feature type="strand" evidence="7">
    <location>
        <begin position="335"/>
        <end position="339"/>
    </location>
</feature>
<feature type="strand" evidence="7">
    <location>
        <begin position="345"/>
        <end position="348"/>
    </location>
</feature>
<feature type="strand" evidence="7">
    <location>
        <begin position="350"/>
        <end position="355"/>
    </location>
</feature>
<feature type="strand" evidence="7">
    <location>
        <begin position="360"/>
        <end position="363"/>
    </location>
</feature>
<feature type="strand" evidence="7">
    <location>
        <begin position="370"/>
        <end position="376"/>
    </location>
</feature>
<feature type="strand" evidence="7">
    <location>
        <begin position="379"/>
        <end position="384"/>
    </location>
</feature>
<feature type="strand" evidence="7">
    <location>
        <begin position="391"/>
        <end position="399"/>
    </location>
</feature>
<feature type="strand" evidence="7">
    <location>
        <begin position="402"/>
        <end position="412"/>
    </location>
</feature>
<sequence length="413" mass="45649">MAFKSIAVLSACIIVGSALPVDKYPVLKDQPAEVLFRENNPTVLECIIEGNDQGVKYSWKKDGKSYNWQEHNAALRKDEGSLVFLRPQASDEGHYQCFAETPAGVASSRVISFRKTYLIASPAKTHEKTPIEGRPFQLDCVLPNAYPKPLITWKKRLSGADPNADVTDFDRRITAGPDGNLYFTIVTKEDVSDIYKYVCTAKNAAVDEEVVLVEYEIKGVTKDNSGYKGEPVPQYVSKDMMAKAGDVTMIYCMYGSNPMGYPNYFKNGKDVNGNPEDRITRHNRTSGKRLLFKTTLPEDEGVYTCEVDNGVGKPQKHSLKLTVVSAPKYEQKPEKVIVVKQGQDVTIPCKVTGLPAPNVVWSHNAKPLSGGRATVTDSGLVIKGVKNGDKGYYGCRATNEHGDKYFETLVQVN</sequence>
<evidence type="ECO:0000255" key="1"/>
<evidence type="ECO:0000255" key="2">
    <source>
        <dbReference type="PROSITE-ProRule" id="PRU00114"/>
    </source>
</evidence>
<evidence type="ECO:0000269" key="3">
    <source>
    </source>
</evidence>
<evidence type="ECO:0000269" key="4">
    <source ref="2"/>
</evidence>
<evidence type="ECO:0000305" key="5"/>
<evidence type="ECO:0007744" key="6">
    <source>
        <dbReference type="PDB" id="1BIH"/>
    </source>
</evidence>
<evidence type="ECO:0007829" key="7">
    <source>
        <dbReference type="PDB" id="1BIH"/>
    </source>
</evidence>